<organism>
    <name type="scientific">Streptococcus pyogenes serotype M1</name>
    <dbReference type="NCBI Taxonomy" id="301447"/>
    <lineage>
        <taxon>Bacteria</taxon>
        <taxon>Bacillati</taxon>
        <taxon>Bacillota</taxon>
        <taxon>Bacilli</taxon>
        <taxon>Lactobacillales</taxon>
        <taxon>Streptococcaceae</taxon>
        <taxon>Streptococcus</taxon>
    </lineage>
</organism>
<protein>
    <recommendedName>
        <fullName evidence="1">Small ribosomal subunit protein uS7</fullName>
    </recommendedName>
    <alternativeName>
        <fullName evidence="2">30S ribosomal protein S7</fullName>
    </alternativeName>
</protein>
<evidence type="ECO:0000255" key="1">
    <source>
        <dbReference type="HAMAP-Rule" id="MF_00480"/>
    </source>
</evidence>
<evidence type="ECO:0000305" key="2"/>
<feature type="chain" id="PRO_0000124357" description="Small ribosomal subunit protein uS7">
    <location>
        <begin position="1"/>
        <end position="156"/>
    </location>
</feature>
<comment type="function">
    <text evidence="1">One of the primary rRNA binding proteins, it binds directly to 16S rRNA where it nucleates assembly of the head domain of the 30S subunit. Is located at the subunit interface close to the decoding center, probably blocks exit of the E-site tRNA.</text>
</comment>
<comment type="subunit">
    <text evidence="1">Part of the 30S ribosomal subunit. Contacts proteins S9 and S11.</text>
</comment>
<comment type="similarity">
    <text evidence="1">Belongs to the universal ribosomal protein uS7 family.</text>
</comment>
<reference key="1">
    <citation type="journal article" date="2001" name="Proc. Natl. Acad. Sci. U.S.A.">
        <title>Complete genome sequence of an M1 strain of Streptococcus pyogenes.</title>
        <authorList>
            <person name="Ferretti J.J."/>
            <person name="McShan W.M."/>
            <person name="Ajdic D.J."/>
            <person name="Savic D.J."/>
            <person name="Savic G."/>
            <person name="Lyon K."/>
            <person name="Primeaux C."/>
            <person name="Sezate S."/>
            <person name="Suvorov A.N."/>
            <person name="Kenton S."/>
            <person name="Lai H.S."/>
            <person name="Lin S.P."/>
            <person name="Qian Y."/>
            <person name="Jia H.G."/>
            <person name="Najar F.Z."/>
            <person name="Ren Q."/>
            <person name="Zhu H."/>
            <person name="Song L."/>
            <person name="White J."/>
            <person name="Yuan X."/>
            <person name="Clifton S.W."/>
            <person name="Roe B.A."/>
            <person name="McLaughlin R.E."/>
        </authorList>
    </citation>
    <scope>NUCLEOTIDE SEQUENCE [LARGE SCALE GENOMIC DNA]</scope>
    <source>
        <strain>ATCC 700294 / SF370 / Serotype M1</strain>
    </source>
</reference>
<reference key="2">
    <citation type="journal article" date="2005" name="J. Infect. Dis.">
        <title>Evolutionary origin and emergence of a highly successful clone of serotype M1 group A Streptococcus involved multiple horizontal gene transfer events.</title>
        <authorList>
            <person name="Sumby P."/>
            <person name="Porcella S.F."/>
            <person name="Madrigal A.G."/>
            <person name="Barbian K.D."/>
            <person name="Virtaneva K."/>
            <person name="Ricklefs S.M."/>
            <person name="Sturdevant D.E."/>
            <person name="Graham M.R."/>
            <person name="Vuopio-Varkila J."/>
            <person name="Hoe N.P."/>
            <person name="Musser J.M."/>
        </authorList>
    </citation>
    <scope>NUCLEOTIDE SEQUENCE [LARGE SCALE GENOMIC DNA]</scope>
    <source>
        <strain>ATCC BAA-947 / MGAS5005 / Serotype M1</strain>
    </source>
</reference>
<reference key="3">
    <citation type="submission" date="2014-04" db="EMBL/GenBank/DDBJ databases">
        <authorList>
            <person name="Beres S.B."/>
            <person name="Musser J.M."/>
        </authorList>
    </citation>
    <scope>SEQUENCE REVISION TO 72</scope>
</reference>
<gene>
    <name evidence="1" type="primary">rpsG</name>
    <name type="ordered locus">SPy_0272</name>
    <name type="ordered locus">M5005_Spy0231</name>
</gene>
<accession>P66619</accession>
<accession>Q490W8</accession>
<accession>Q9A1H2</accession>
<name>RS7_STRP1</name>
<sequence>MSRKNQAPKREVLPDPLYNSKIVTRLINRVMLDGKRGTAATIVYDAFNAIKEATGNDALEVFETAMDNIMPVLEVRARRVGGSNYQVPVEVRPERRTTLGLRWLVNASRARGEHTMKDRLAKEIMDAANNTGASVKKREDTHKMAEANRAFAHFRW</sequence>
<proteinExistence type="inferred from homology"/>
<keyword id="KW-1185">Reference proteome</keyword>
<keyword id="KW-0687">Ribonucleoprotein</keyword>
<keyword id="KW-0689">Ribosomal protein</keyword>
<keyword id="KW-0694">RNA-binding</keyword>
<keyword id="KW-0699">rRNA-binding</keyword>
<keyword id="KW-0820">tRNA-binding</keyword>
<dbReference type="EMBL" id="AE004092">
    <property type="protein sequence ID" value="AAK33346.1"/>
    <property type="molecule type" value="Genomic_DNA"/>
</dbReference>
<dbReference type="EMBL" id="CP000017">
    <property type="protein sequence ID" value="AAZ50850.2"/>
    <property type="molecule type" value="Genomic_DNA"/>
</dbReference>
<dbReference type="RefSeq" id="NP_268625.1">
    <property type="nucleotide sequence ID" value="NC_002737.2"/>
</dbReference>
<dbReference type="SMR" id="P66619"/>
<dbReference type="PaxDb" id="1314-HKU360_00271"/>
<dbReference type="KEGG" id="spy:SPy_0272"/>
<dbReference type="KEGG" id="spz:M5005_Spy0231"/>
<dbReference type="PATRIC" id="fig|160490.10.peg.239"/>
<dbReference type="HOGENOM" id="CLU_072226_1_1_9"/>
<dbReference type="OMA" id="DDTHRMA"/>
<dbReference type="PRO" id="PR:P66619"/>
<dbReference type="Proteomes" id="UP000000750">
    <property type="component" value="Chromosome"/>
</dbReference>
<dbReference type="GO" id="GO:0015935">
    <property type="term" value="C:small ribosomal subunit"/>
    <property type="evidence" value="ECO:0007669"/>
    <property type="project" value="InterPro"/>
</dbReference>
<dbReference type="GO" id="GO:0019843">
    <property type="term" value="F:rRNA binding"/>
    <property type="evidence" value="ECO:0007669"/>
    <property type="project" value="UniProtKB-UniRule"/>
</dbReference>
<dbReference type="GO" id="GO:0003735">
    <property type="term" value="F:structural constituent of ribosome"/>
    <property type="evidence" value="ECO:0007669"/>
    <property type="project" value="InterPro"/>
</dbReference>
<dbReference type="GO" id="GO:0000049">
    <property type="term" value="F:tRNA binding"/>
    <property type="evidence" value="ECO:0007669"/>
    <property type="project" value="UniProtKB-UniRule"/>
</dbReference>
<dbReference type="GO" id="GO:0006412">
    <property type="term" value="P:translation"/>
    <property type="evidence" value="ECO:0007669"/>
    <property type="project" value="UniProtKB-UniRule"/>
</dbReference>
<dbReference type="CDD" id="cd14869">
    <property type="entry name" value="uS7_Bacteria"/>
    <property type="match status" value="1"/>
</dbReference>
<dbReference type="FunFam" id="1.10.455.10:FF:000001">
    <property type="entry name" value="30S ribosomal protein S7"/>
    <property type="match status" value="1"/>
</dbReference>
<dbReference type="Gene3D" id="1.10.455.10">
    <property type="entry name" value="Ribosomal protein S7 domain"/>
    <property type="match status" value="1"/>
</dbReference>
<dbReference type="HAMAP" id="MF_00480_B">
    <property type="entry name" value="Ribosomal_uS7_B"/>
    <property type="match status" value="1"/>
</dbReference>
<dbReference type="InterPro" id="IPR000235">
    <property type="entry name" value="Ribosomal_uS7"/>
</dbReference>
<dbReference type="InterPro" id="IPR005717">
    <property type="entry name" value="Ribosomal_uS7_bac/org-type"/>
</dbReference>
<dbReference type="InterPro" id="IPR020606">
    <property type="entry name" value="Ribosomal_uS7_CS"/>
</dbReference>
<dbReference type="InterPro" id="IPR023798">
    <property type="entry name" value="Ribosomal_uS7_dom"/>
</dbReference>
<dbReference type="InterPro" id="IPR036823">
    <property type="entry name" value="Ribosomal_uS7_dom_sf"/>
</dbReference>
<dbReference type="NCBIfam" id="TIGR01029">
    <property type="entry name" value="rpsG_bact"/>
    <property type="match status" value="1"/>
</dbReference>
<dbReference type="PANTHER" id="PTHR11205">
    <property type="entry name" value="RIBOSOMAL PROTEIN S7"/>
    <property type="match status" value="1"/>
</dbReference>
<dbReference type="Pfam" id="PF00177">
    <property type="entry name" value="Ribosomal_S7"/>
    <property type="match status" value="1"/>
</dbReference>
<dbReference type="PIRSF" id="PIRSF002122">
    <property type="entry name" value="RPS7p_RPS7a_RPS5e_RPS7o"/>
    <property type="match status" value="1"/>
</dbReference>
<dbReference type="SUPFAM" id="SSF47973">
    <property type="entry name" value="Ribosomal protein S7"/>
    <property type="match status" value="1"/>
</dbReference>
<dbReference type="PROSITE" id="PS00052">
    <property type="entry name" value="RIBOSOMAL_S7"/>
    <property type="match status" value="1"/>
</dbReference>